<comment type="function">
    <text evidence="1">Plays an important role in the de novo pathway of purine nucleotide biosynthesis. Catalyzes the first committed step in the biosynthesis of AMP from IMP.</text>
</comment>
<comment type="catalytic activity">
    <reaction evidence="1">
        <text>IMP + L-aspartate + GTP = N(6)-(1,2-dicarboxyethyl)-AMP + GDP + phosphate + 2 H(+)</text>
        <dbReference type="Rhea" id="RHEA:15753"/>
        <dbReference type="ChEBI" id="CHEBI:15378"/>
        <dbReference type="ChEBI" id="CHEBI:29991"/>
        <dbReference type="ChEBI" id="CHEBI:37565"/>
        <dbReference type="ChEBI" id="CHEBI:43474"/>
        <dbReference type="ChEBI" id="CHEBI:57567"/>
        <dbReference type="ChEBI" id="CHEBI:58053"/>
        <dbReference type="ChEBI" id="CHEBI:58189"/>
        <dbReference type="EC" id="6.3.4.4"/>
    </reaction>
</comment>
<comment type="cofactor">
    <cofactor evidence="1">
        <name>Mg(2+)</name>
        <dbReference type="ChEBI" id="CHEBI:18420"/>
    </cofactor>
    <text evidence="1">Binds 1 Mg(2+) ion per subunit.</text>
</comment>
<comment type="pathway">
    <text evidence="1">Purine metabolism; AMP biosynthesis via de novo pathway; AMP from IMP: step 1/2.</text>
</comment>
<comment type="subunit">
    <text evidence="1">Homodimer.</text>
</comment>
<comment type="subcellular location">
    <subcellularLocation>
        <location evidence="1">Cytoplasm</location>
    </subcellularLocation>
</comment>
<comment type="similarity">
    <text evidence="1">Belongs to the adenylosuccinate synthetase family.</text>
</comment>
<reference key="1">
    <citation type="submission" date="1993-11" db="EMBL/GenBank/DDBJ databases">
        <title>Identification and organization of pyrG, purA and purB genes in Spiroplasma citri.</title>
        <authorList>
            <person name="Citti C."/>
            <person name="Saillard C."/>
            <person name="Bove J.M."/>
        </authorList>
    </citation>
    <scope>NUCLEOTIDE SEQUENCE [GENOMIC DNA]</scope>
    <source>
        <strain>R8A2HP</strain>
    </source>
</reference>
<keyword id="KW-0963">Cytoplasm</keyword>
<keyword id="KW-0342">GTP-binding</keyword>
<keyword id="KW-0436">Ligase</keyword>
<keyword id="KW-0460">Magnesium</keyword>
<keyword id="KW-0479">Metal-binding</keyword>
<keyword id="KW-0547">Nucleotide-binding</keyword>
<keyword id="KW-0658">Purine biosynthesis</keyword>
<proteinExistence type="inferred from homology"/>
<evidence type="ECO:0000255" key="1">
    <source>
        <dbReference type="HAMAP-Rule" id="MF_00011"/>
    </source>
</evidence>
<organism>
    <name type="scientific">Spiroplasma citri</name>
    <dbReference type="NCBI Taxonomy" id="2133"/>
    <lineage>
        <taxon>Bacteria</taxon>
        <taxon>Bacillati</taxon>
        <taxon>Mycoplasmatota</taxon>
        <taxon>Mollicutes</taxon>
        <taxon>Entomoplasmatales</taxon>
        <taxon>Spiroplasmataceae</taxon>
        <taxon>Spiroplasma</taxon>
    </lineage>
</organism>
<protein>
    <recommendedName>
        <fullName evidence="1">Adenylosuccinate synthetase</fullName>
        <shortName evidence="1">AMPSase</shortName>
        <shortName evidence="1">AdSS</shortName>
        <ecNumber evidence="1">6.3.4.4</ecNumber>
    </recommendedName>
    <alternativeName>
        <fullName evidence="1">IMP--aspartate ligase</fullName>
    </alternativeName>
</protein>
<sequence length="435" mass="49609">MSGTNYRTLAIVGSQWGDEGKGKITDYFAQQADLIVRWAGGDNAGHTIVIKRNKYKLSIVPSGAFNKKSMNVIGMVVVVNLRKLSYGNWVIYKQHGFDLLKNLRISDRVHLIFPYHMKIDELQEEYRQKDSIGTTKKGIGPCYQDKAERIGIRLGDLFDEKGFLQKLENNLKFKNEVLQKFLIVKDLTKINLKRIFWHYFQQIKSLVTDTSILVDNAIHNHQKFYLKEAQGVMLDLDHGTYPFVTSSNPTASSIPVGVGIAPRYINNVLGIVKAYNTRVGTGPFPSEIFGEVETYIREAGHEYGTVSGRARWIGWFDGILMKHSRELVVILVWLIMLLDVLTTIKELKICVGYEYQGQQIDYVPSTIKEYEMCKPILITMPGWDEDISNVTTFEGLPHNAQQYLMKLEEIVGVPISLFSVGPDREQTILMNKEIF</sequence>
<gene>
    <name evidence="1" type="primary">purA</name>
</gene>
<feature type="chain" id="PRO_0000095225" description="Adenylosuccinate synthetase">
    <location>
        <begin position="1"/>
        <end position="435"/>
    </location>
</feature>
<feature type="active site" description="Proton acceptor" evidence="1">
    <location>
        <position position="18"/>
    </location>
</feature>
<feature type="active site" description="Proton donor" evidence="1">
    <location>
        <position position="46"/>
    </location>
</feature>
<feature type="binding site" evidence="1">
    <location>
        <begin position="17"/>
        <end position="23"/>
    </location>
    <ligand>
        <name>GTP</name>
        <dbReference type="ChEBI" id="CHEBI:37565"/>
    </ligand>
</feature>
<feature type="binding site" description="in other chain" evidence="1">
    <location>
        <begin position="18"/>
        <end position="21"/>
    </location>
    <ligand>
        <name>IMP</name>
        <dbReference type="ChEBI" id="CHEBI:58053"/>
        <note>ligand shared between dimeric partners</note>
    </ligand>
</feature>
<feature type="binding site" evidence="1">
    <location>
        <position position="18"/>
    </location>
    <ligand>
        <name>Mg(2+)</name>
        <dbReference type="ChEBI" id="CHEBI:18420"/>
    </ligand>
</feature>
<feature type="binding site" description="in other chain" evidence="1">
    <location>
        <begin position="43"/>
        <end position="46"/>
    </location>
    <ligand>
        <name>IMP</name>
        <dbReference type="ChEBI" id="CHEBI:58053"/>
        <note>ligand shared between dimeric partners</note>
    </ligand>
</feature>
<feature type="binding site" evidence="1">
    <location>
        <begin position="45"/>
        <end position="47"/>
    </location>
    <ligand>
        <name>GTP</name>
        <dbReference type="ChEBI" id="CHEBI:37565"/>
    </ligand>
</feature>
<feature type="binding site" evidence="1">
    <location>
        <position position="45"/>
    </location>
    <ligand>
        <name>Mg(2+)</name>
        <dbReference type="ChEBI" id="CHEBI:18420"/>
    </ligand>
</feature>
<feature type="binding site" description="in other chain" evidence="1">
    <location>
        <position position="135"/>
    </location>
    <ligand>
        <name>IMP</name>
        <dbReference type="ChEBI" id="CHEBI:58053"/>
        <note>ligand shared between dimeric partners</note>
    </ligand>
</feature>
<feature type="binding site" evidence="1">
    <location>
        <position position="149"/>
    </location>
    <ligand>
        <name>IMP</name>
        <dbReference type="ChEBI" id="CHEBI:58053"/>
        <note>ligand shared between dimeric partners</note>
    </ligand>
</feature>
<feature type="binding site" description="in other chain" evidence="1">
    <location>
        <position position="230"/>
    </location>
    <ligand>
        <name>IMP</name>
        <dbReference type="ChEBI" id="CHEBI:58053"/>
        <note>ligand shared between dimeric partners</note>
    </ligand>
</feature>
<feature type="binding site" description="in other chain" evidence="1">
    <location>
        <position position="245"/>
    </location>
    <ligand>
        <name>IMP</name>
        <dbReference type="ChEBI" id="CHEBI:58053"/>
        <note>ligand shared between dimeric partners</note>
    </ligand>
</feature>
<feature type="binding site" evidence="1">
    <location>
        <begin position="305"/>
        <end position="311"/>
    </location>
    <ligand>
        <name>substrate</name>
    </ligand>
</feature>
<feature type="binding site" description="in other chain" evidence="1">
    <location>
        <position position="309"/>
    </location>
    <ligand>
        <name>IMP</name>
        <dbReference type="ChEBI" id="CHEBI:58053"/>
        <note>ligand shared between dimeric partners</note>
    </ligand>
</feature>
<feature type="binding site" evidence="1">
    <location>
        <position position="311"/>
    </location>
    <ligand>
        <name>GTP</name>
        <dbReference type="ChEBI" id="CHEBI:37565"/>
    </ligand>
</feature>
<feature type="binding site" evidence="1">
    <location>
        <begin position="337"/>
        <end position="339"/>
    </location>
    <ligand>
        <name>GTP</name>
        <dbReference type="ChEBI" id="CHEBI:37565"/>
    </ligand>
</feature>
<feature type="binding site" evidence="1">
    <location>
        <begin position="419"/>
        <end position="421"/>
    </location>
    <ligand>
        <name>GTP</name>
        <dbReference type="ChEBI" id="CHEBI:37565"/>
    </ligand>
</feature>
<dbReference type="EC" id="6.3.4.4" evidence="1"/>
<dbReference type="EMBL" id="L22971">
    <property type="protein sequence ID" value="AAA26586.1"/>
    <property type="molecule type" value="Genomic_DNA"/>
</dbReference>
<dbReference type="SMR" id="P52150"/>
<dbReference type="STRING" id="2133.SCITRI_00274"/>
<dbReference type="UniPathway" id="UPA00075">
    <property type="reaction ID" value="UER00335"/>
</dbReference>
<dbReference type="GO" id="GO:0005737">
    <property type="term" value="C:cytoplasm"/>
    <property type="evidence" value="ECO:0007669"/>
    <property type="project" value="UniProtKB-SubCell"/>
</dbReference>
<dbReference type="GO" id="GO:0004019">
    <property type="term" value="F:adenylosuccinate synthase activity"/>
    <property type="evidence" value="ECO:0007669"/>
    <property type="project" value="UniProtKB-UniRule"/>
</dbReference>
<dbReference type="GO" id="GO:0005525">
    <property type="term" value="F:GTP binding"/>
    <property type="evidence" value="ECO:0007669"/>
    <property type="project" value="UniProtKB-UniRule"/>
</dbReference>
<dbReference type="GO" id="GO:0000287">
    <property type="term" value="F:magnesium ion binding"/>
    <property type="evidence" value="ECO:0007669"/>
    <property type="project" value="UniProtKB-UniRule"/>
</dbReference>
<dbReference type="GO" id="GO:0044208">
    <property type="term" value="P:'de novo' AMP biosynthetic process"/>
    <property type="evidence" value="ECO:0007669"/>
    <property type="project" value="UniProtKB-UniRule"/>
</dbReference>
<dbReference type="GO" id="GO:0046040">
    <property type="term" value="P:IMP metabolic process"/>
    <property type="evidence" value="ECO:0007669"/>
    <property type="project" value="TreeGrafter"/>
</dbReference>
<dbReference type="CDD" id="cd03108">
    <property type="entry name" value="AdSS"/>
    <property type="match status" value="1"/>
</dbReference>
<dbReference type="FunFam" id="1.10.300.10:FF:000001">
    <property type="entry name" value="Adenylosuccinate synthetase"/>
    <property type="match status" value="1"/>
</dbReference>
<dbReference type="FunFam" id="3.90.170.10:FF:000001">
    <property type="entry name" value="Adenylosuccinate synthetase"/>
    <property type="match status" value="1"/>
</dbReference>
<dbReference type="Gene3D" id="3.40.440.10">
    <property type="entry name" value="Adenylosuccinate Synthetase, subunit A, domain 1"/>
    <property type="match status" value="1"/>
</dbReference>
<dbReference type="Gene3D" id="1.10.300.10">
    <property type="entry name" value="Adenylosuccinate Synthetase, subunit A, domain 2"/>
    <property type="match status" value="1"/>
</dbReference>
<dbReference type="Gene3D" id="3.90.170.10">
    <property type="entry name" value="Adenylosuccinate Synthetase, subunit A, domain 3"/>
    <property type="match status" value="1"/>
</dbReference>
<dbReference type="HAMAP" id="MF_00011">
    <property type="entry name" value="Adenylosucc_synth"/>
    <property type="match status" value="1"/>
</dbReference>
<dbReference type="InterPro" id="IPR018220">
    <property type="entry name" value="Adenylosuccin_syn_GTP-bd"/>
</dbReference>
<dbReference type="InterPro" id="IPR033128">
    <property type="entry name" value="Adenylosuccin_syn_Lys_AS"/>
</dbReference>
<dbReference type="InterPro" id="IPR042109">
    <property type="entry name" value="Adenylosuccinate_synth_dom1"/>
</dbReference>
<dbReference type="InterPro" id="IPR042110">
    <property type="entry name" value="Adenylosuccinate_synth_dom2"/>
</dbReference>
<dbReference type="InterPro" id="IPR042111">
    <property type="entry name" value="Adenylosuccinate_synth_dom3"/>
</dbReference>
<dbReference type="InterPro" id="IPR001114">
    <property type="entry name" value="Adenylosuccinate_synthetase"/>
</dbReference>
<dbReference type="InterPro" id="IPR027417">
    <property type="entry name" value="P-loop_NTPase"/>
</dbReference>
<dbReference type="NCBIfam" id="NF002223">
    <property type="entry name" value="PRK01117.1"/>
    <property type="match status" value="1"/>
</dbReference>
<dbReference type="NCBIfam" id="TIGR00184">
    <property type="entry name" value="purA"/>
    <property type="match status" value="1"/>
</dbReference>
<dbReference type="PANTHER" id="PTHR11846">
    <property type="entry name" value="ADENYLOSUCCINATE SYNTHETASE"/>
    <property type="match status" value="1"/>
</dbReference>
<dbReference type="PANTHER" id="PTHR11846:SF0">
    <property type="entry name" value="ADENYLOSUCCINATE SYNTHETASE"/>
    <property type="match status" value="1"/>
</dbReference>
<dbReference type="Pfam" id="PF00709">
    <property type="entry name" value="Adenylsucc_synt"/>
    <property type="match status" value="1"/>
</dbReference>
<dbReference type="SMART" id="SM00788">
    <property type="entry name" value="Adenylsucc_synt"/>
    <property type="match status" value="1"/>
</dbReference>
<dbReference type="SUPFAM" id="SSF52540">
    <property type="entry name" value="P-loop containing nucleoside triphosphate hydrolases"/>
    <property type="match status" value="1"/>
</dbReference>
<dbReference type="PROSITE" id="PS01266">
    <property type="entry name" value="ADENYLOSUCCIN_SYN_1"/>
    <property type="match status" value="1"/>
</dbReference>
<dbReference type="PROSITE" id="PS00513">
    <property type="entry name" value="ADENYLOSUCCIN_SYN_2"/>
    <property type="match status" value="1"/>
</dbReference>
<name>PURA_SPICI</name>
<accession>P52150</accession>